<evidence type="ECO:0000255" key="1">
    <source>
        <dbReference type="HAMAP-Rule" id="MF_01964"/>
    </source>
</evidence>
<evidence type="ECO:0000305" key="2"/>
<keyword id="KW-0129">CBS domain</keyword>
<keyword id="KW-0332">GMP biosynthesis</keyword>
<keyword id="KW-0479">Metal-binding</keyword>
<keyword id="KW-0520">NAD</keyword>
<keyword id="KW-0560">Oxidoreductase</keyword>
<keyword id="KW-0630">Potassium</keyword>
<keyword id="KW-0658">Purine biosynthesis</keyword>
<keyword id="KW-1185">Reference proteome</keyword>
<keyword id="KW-0677">Repeat</keyword>
<comment type="function">
    <text evidence="1">Catalyzes the conversion of inosine 5'-phosphate (IMP) to xanthosine 5'-phosphate (XMP), the first committed and rate-limiting step in the de novo synthesis of guanine nucleotides, and therefore plays an important role in the regulation of cell growth.</text>
</comment>
<comment type="catalytic activity">
    <reaction evidence="1">
        <text>IMP + NAD(+) + H2O = XMP + NADH + H(+)</text>
        <dbReference type="Rhea" id="RHEA:11708"/>
        <dbReference type="ChEBI" id="CHEBI:15377"/>
        <dbReference type="ChEBI" id="CHEBI:15378"/>
        <dbReference type="ChEBI" id="CHEBI:57464"/>
        <dbReference type="ChEBI" id="CHEBI:57540"/>
        <dbReference type="ChEBI" id="CHEBI:57945"/>
        <dbReference type="ChEBI" id="CHEBI:58053"/>
        <dbReference type="EC" id="1.1.1.205"/>
    </reaction>
</comment>
<comment type="cofactor">
    <cofactor evidence="1">
        <name>K(+)</name>
        <dbReference type="ChEBI" id="CHEBI:29103"/>
    </cofactor>
</comment>
<comment type="activity regulation">
    <text evidence="1">Mycophenolic acid (MPA) is a non-competitive inhibitor that prevents formation of the closed enzyme conformation by binding to the same site as the amobile flap. In contrast, mizoribine monophosphate (MZP) is a competitive inhibitor that induces the closed conformation. MPA is a potent inhibitor of mammalian IMPDHs but a poor inhibitor of the bacterial enzymes. MZP is a more potent inhibitor of bacterial IMPDH.</text>
</comment>
<comment type="pathway">
    <text evidence="1">Purine metabolism; XMP biosynthesis via de novo pathway; XMP from IMP: step 1/1.</text>
</comment>
<comment type="subunit">
    <text evidence="1">Homotetramer.</text>
</comment>
<comment type="similarity">
    <text evidence="1">Belongs to the IMPDH/GMPR family.</text>
</comment>
<comment type="sequence caution" evidence="2">
    <conflict type="erroneous initiation">
        <sequence resource="EMBL-CDS" id="AAM84935"/>
    </conflict>
    <text>Extended N-terminus.</text>
</comment>
<comment type="sequence caution" evidence="2">
    <conflict type="erroneous initiation">
        <sequence resource="EMBL-CDS" id="AAS62925"/>
    </conflict>
    <text>Extended N-terminus.</text>
</comment>
<proteinExistence type="inferred from homology"/>
<reference key="1">
    <citation type="journal article" date="2001" name="Nature">
        <title>Genome sequence of Yersinia pestis, the causative agent of plague.</title>
        <authorList>
            <person name="Parkhill J."/>
            <person name="Wren B.W."/>
            <person name="Thomson N.R."/>
            <person name="Titball R.W."/>
            <person name="Holden M.T.G."/>
            <person name="Prentice M.B."/>
            <person name="Sebaihia M."/>
            <person name="James K.D."/>
            <person name="Churcher C.M."/>
            <person name="Mungall K.L."/>
            <person name="Baker S."/>
            <person name="Basham D."/>
            <person name="Bentley S.D."/>
            <person name="Brooks K."/>
            <person name="Cerdeno-Tarraga A.-M."/>
            <person name="Chillingworth T."/>
            <person name="Cronin A."/>
            <person name="Davies R.M."/>
            <person name="Davis P."/>
            <person name="Dougan G."/>
            <person name="Feltwell T."/>
            <person name="Hamlin N."/>
            <person name="Holroyd S."/>
            <person name="Jagels K."/>
            <person name="Karlyshev A.V."/>
            <person name="Leather S."/>
            <person name="Moule S."/>
            <person name="Oyston P.C.F."/>
            <person name="Quail M.A."/>
            <person name="Rutherford K.M."/>
            <person name="Simmonds M."/>
            <person name="Skelton J."/>
            <person name="Stevens K."/>
            <person name="Whitehead S."/>
            <person name="Barrell B.G."/>
        </authorList>
    </citation>
    <scope>NUCLEOTIDE SEQUENCE [LARGE SCALE GENOMIC DNA]</scope>
    <source>
        <strain>CO-92 / Biovar Orientalis</strain>
    </source>
</reference>
<reference key="2">
    <citation type="journal article" date="2002" name="J. Bacteriol.">
        <title>Genome sequence of Yersinia pestis KIM.</title>
        <authorList>
            <person name="Deng W."/>
            <person name="Burland V."/>
            <person name="Plunkett G. III"/>
            <person name="Boutin A."/>
            <person name="Mayhew G.F."/>
            <person name="Liss P."/>
            <person name="Perna N.T."/>
            <person name="Rose D.J."/>
            <person name="Mau B."/>
            <person name="Zhou S."/>
            <person name="Schwartz D.C."/>
            <person name="Fetherston J.D."/>
            <person name="Lindler L.E."/>
            <person name="Brubaker R.R."/>
            <person name="Plano G.V."/>
            <person name="Straley S.C."/>
            <person name="McDonough K.A."/>
            <person name="Nilles M.L."/>
            <person name="Matson J.S."/>
            <person name="Blattner F.R."/>
            <person name="Perry R.D."/>
        </authorList>
    </citation>
    <scope>NUCLEOTIDE SEQUENCE [LARGE SCALE GENOMIC DNA]</scope>
    <source>
        <strain>KIM10+ / Biovar Mediaevalis</strain>
    </source>
</reference>
<reference key="3">
    <citation type="journal article" date="2004" name="DNA Res.">
        <title>Complete genome sequence of Yersinia pestis strain 91001, an isolate avirulent to humans.</title>
        <authorList>
            <person name="Song Y."/>
            <person name="Tong Z."/>
            <person name="Wang J."/>
            <person name="Wang L."/>
            <person name="Guo Z."/>
            <person name="Han Y."/>
            <person name="Zhang J."/>
            <person name="Pei D."/>
            <person name="Zhou D."/>
            <person name="Qin H."/>
            <person name="Pang X."/>
            <person name="Han Y."/>
            <person name="Zhai J."/>
            <person name="Li M."/>
            <person name="Cui B."/>
            <person name="Qi Z."/>
            <person name="Jin L."/>
            <person name="Dai R."/>
            <person name="Chen F."/>
            <person name="Li S."/>
            <person name="Ye C."/>
            <person name="Du Z."/>
            <person name="Lin W."/>
            <person name="Wang J."/>
            <person name="Yu J."/>
            <person name="Yang H."/>
            <person name="Wang J."/>
            <person name="Huang P."/>
            <person name="Yang R."/>
        </authorList>
    </citation>
    <scope>NUCLEOTIDE SEQUENCE [LARGE SCALE GENOMIC DNA]</scope>
    <source>
        <strain>91001 / Biovar Mediaevalis</strain>
    </source>
</reference>
<organism>
    <name type="scientific">Yersinia pestis</name>
    <dbReference type="NCBI Taxonomy" id="632"/>
    <lineage>
        <taxon>Bacteria</taxon>
        <taxon>Pseudomonadati</taxon>
        <taxon>Pseudomonadota</taxon>
        <taxon>Gammaproteobacteria</taxon>
        <taxon>Enterobacterales</taxon>
        <taxon>Yersiniaceae</taxon>
        <taxon>Yersinia</taxon>
    </lineage>
</organism>
<dbReference type="EC" id="1.1.1.205" evidence="1"/>
<dbReference type="EMBL" id="AL590842">
    <property type="protein sequence ID" value="CAL21482.1"/>
    <property type="molecule type" value="Genomic_DNA"/>
</dbReference>
<dbReference type="EMBL" id="AE009952">
    <property type="protein sequence ID" value="AAM84935.1"/>
    <property type="status" value="ALT_INIT"/>
    <property type="molecule type" value="Genomic_DNA"/>
</dbReference>
<dbReference type="EMBL" id="AE017042">
    <property type="protein sequence ID" value="AAS62925.1"/>
    <property type="status" value="ALT_INIT"/>
    <property type="molecule type" value="Genomic_DNA"/>
</dbReference>
<dbReference type="PIR" id="AG0349">
    <property type="entry name" value="AG0349"/>
</dbReference>
<dbReference type="RefSeq" id="WP_002227862.1">
    <property type="nucleotide sequence ID" value="NZ_WUCM01000067.1"/>
</dbReference>
<dbReference type="RefSeq" id="YP_002347806.1">
    <property type="nucleotide sequence ID" value="NC_003143.1"/>
</dbReference>
<dbReference type="SMR" id="Q0WD32"/>
<dbReference type="STRING" id="214092.YPO2871"/>
<dbReference type="PaxDb" id="214092-YPO2871"/>
<dbReference type="DNASU" id="1146309"/>
<dbReference type="EnsemblBacteria" id="AAS62925">
    <property type="protein sequence ID" value="AAS62925"/>
    <property type="gene ID" value="YP_2737"/>
</dbReference>
<dbReference type="GeneID" id="96662194"/>
<dbReference type="KEGG" id="ype:YPO2871"/>
<dbReference type="KEGG" id="ypk:y1362"/>
<dbReference type="KEGG" id="ypm:YP_2737"/>
<dbReference type="PATRIC" id="fig|214092.21.peg.3317"/>
<dbReference type="eggNOG" id="COG0516">
    <property type="taxonomic scope" value="Bacteria"/>
</dbReference>
<dbReference type="eggNOG" id="COG0517">
    <property type="taxonomic scope" value="Bacteria"/>
</dbReference>
<dbReference type="HOGENOM" id="CLU_022552_2_2_6"/>
<dbReference type="OrthoDB" id="9805398at2"/>
<dbReference type="UniPathway" id="UPA00601">
    <property type="reaction ID" value="UER00295"/>
</dbReference>
<dbReference type="Proteomes" id="UP000000815">
    <property type="component" value="Chromosome"/>
</dbReference>
<dbReference type="Proteomes" id="UP000001019">
    <property type="component" value="Chromosome"/>
</dbReference>
<dbReference type="Proteomes" id="UP000002490">
    <property type="component" value="Chromosome"/>
</dbReference>
<dbReference type="GO" id="GO:0003938">
    <property type="term" value="F:IMP dehydrogenase activity"/>
    <property type="evidence" value="ECO:0000318"/>
    <property type="project" value="GO_Central"/>
</dbReference>
<dbReference type="GO" id="GO:0046872">
    <property type="term" value="F:metal ion binding"/>
    <property type="evidence" value="ECO:0007669"/>
    <property type="project" value="UniProtKB-UniRule"/>
</dbReference>
<dbReference type="GO" id="GO:0000166">
    <property type="term" value="F:nucleotide binding"/>
    <property type="evidence" value="ECO:0007669"/>
    <property type="project" value="UniProtKB-UniRule"/>
</dbReference>
<dbReference type="GO" id="GO:0006177">
    <property type="term" value="P:GMP biosynthetic process"/>
    <property type="evidence" value="ECO:0007669"/>
    <property type="project" value="UniProtKB-UniRule"/>
</dbReference>
<dbReference type="GO" id="GO:0006183">
    <property type="term" value="P:GTP biosynthetic process"/>
    <property type="evidence" value="ECO:0000318"/>
    <property type="project" value="GO_Central"/>
</dbReference>
<dbReference type="CDD" id="cd04601">
    <property type="entry name" value="CBS_pair_IMPDH"/>
    <property type="match status" value="1"/>
</dbReference>
<dbReference type="CDD" id="cd00381">
    <property type="entry name" value="IMPDH"/>
    <property type="match status" value="1"/>
</dbReference>
<dbReference type="FunFam" id="3.20.20.70:FF:000003">
    <property type="entry name" value="GMP reductase"/>
    <property type="match status" value="1"/>
</dbReference>
<dbReference type="Gene3D" id="3.20.20.70">
    <property type="entry name" value="Aldolase class I"/>
    <property type="match status" value="1"/>
</dbReference>
<dbReference type="HAMAP" id="MF_01964">
    <property type="entry name" value="IMPDH"/>
    <property type="match status" value="1"/>
</dbReference>
<dbReference type="InterPro" id="IPR013785">
    <property type="entry name" value="Aldolase_TIM"/>
</dbReference>
<dbReference type="InterPro" id="IPR000644">
    <property type="entry name" value="CBS_dom"/>
</dbReference>
<dbReference type="InterPro" id="IPR046342">
    <property type="entry name" value="CBS_dom_sf"/>
</dbReference>
<dbReference type="InterPro" id="IPR005990">
    <property type="entry name" value="IMP_DH"/>
</dbReference>
<dbReference type="InterPro" id="IPR015875">
    <property type="entry name" value="IMP_DH/GMP_Rdtase_CS"/>
</dbReference>
<dbReference type="InterPro" id="IPR001093">
    <property type="entry name" value="IMP_DH_GMPRt"/>
</dbReference>
<dbReference type="NCBIfam" id="TIGR01302">
    <property type="entry name" value="IMP_dehydrog"/>
    <property type="match status" value="1"/>
</dbReference>
<dbReference type="PANTHER" id="PTHR11911:SF111">
    <property type="entry name" value="INOSINE-5'-MONOPHOSPHATE DEHYDROGENASE"/>
    <property type="match status" value="1"/>
</dbReference>
<dbReference type="PANTHER" id="PTHR11911">
    <property type="entry name" value="INOSINE-5-MONOPHOSPHATE DEHYDROGENASE RELATED"/>
    <property type="match status" value="1"/>
</dbReference>
<dbReference type="Pfam" id="PF00571">
    <property type="entry name" value="CBS"/>
    <property type="match status" value="2"/>
</dbReference>
<dbReference type="Pfam" id="PF00478">
    <property type="entry name" value="IMPDH"/>
    <property type="match status" value="1"/>
</dbReference>
<dbReference type="PIRSF" id="PIRSF000130">
    <property type="entry name" value="IMPDH"/>
    <property type="match status" value="1"/>
</dbReference>
<dbReference type="SMART" id="SM00116">
    <property type="entry name" value="CBS"/>
    <property type="match status" value="2"/>
</dbReference>
<dbReference type="SMART" id="SM01240">
    <property type="entry name" value="IMPDH"/>
    <property type="match status" value="1"/>
</dbReference>
<dbReference type="SUPFAM" id="SSF54631">
    <property type="entry name" value="CBS-domain pair"/>
    <property type="match status" value="1"/>
</dbReference>
<dbReference type="SUPFAM" id="SSF51412">
    <property type="entry name" value="Inosine monophosphate dehydrogenase (IMPDH)"/>
    <property type="match status" value="1"/>
</dbReference>
<dbReference type="PROSITE" id="PS51371">
    <property type="entry name" value="CBS"/>
    <property type="match status" value="2"/>
</dbReference>
<dbReference type="PROSITE" id="PS00487">
    <property type="entry name" value="IMP_DH_GMP_RED"/>
    <property type="match status" value="1"/>
</dbReference>
<gene>
    <name evidence="1" type="primary">guaB</name>
    <name type="ordered locus">YPO2871</name>
    <name type="ordered locus">y1362</name>
    <name type="ordered locus">YP_2737</name>
</gene>
<accession>Q0WD32</accession>
<accession>Q74S88</accession>
<accession>Q8D0Z1</accession>
<protein>
    <recommendedName>
        <fullName evidence="1">Inosine-5'-monophosphate dehydrogenase</fullName>
        <shortName evidence="1">IMP dehydrogenase</shortName>
        <shortName evidence="1">IMPD</shortName>
        <shortName evidence="1">IMPDH</shortName>
        <ecNumber evidence="1">1.1.1.205</ecNumber>
    </recommendedName>
</protein>
<name>IMDH_YERPE</name>
<feature type="chain" id="PRO_0000415691" description="Inosine-5'-monophosphate dehydrogenase">
    <location>
        <begin position="1"/>
        <end position="487"/>
    </location>
</feature>
<feature type="domain" description="CBS 1" evidence="1">
    <location>
        <begin position="93"/>
        <end position="152"/>
    </location>
</feature>
<feature type="domain" description="CBS 2" evidence="1">
    <location>
        <begin position="153"/>
        <end position="214"/>
    </location>
</feature>
<feature type="active site" description="Thioimidate intermediate" evidence="1">
    <location>
        <position position="305"/>
    </location>
</feature>
<feature type="active site" description="Proton acceptor" evidence="1">
    <location>
        <position position="401"/>
    </location>
</feature>
<feature type="binding site" evidence="1">
    <location>
        <begin position="248"/>
        <end position="250"/>
    </location>
    <ligand>
        <name>NAD(+)</name>
        <dbReference type="ChEBI" id="CHEBI:57540"/>
    </ligand>
</feature>
<feature type="binding site" evidence="1">
    <location>
        <position position="248"/>
    </location>
    <ligand>
        <name>NAD(+)</name>
        <dbReference type="ChEBI" id="CHEBI:57540"/>
    </ligand>
</feature>
<feature type="binding site" evidence="1">
    <location>
        <begin position="298"/>
        <end position="300"/>
    </location>
    <ligand>
        <name>NAD(+)</name>
        <dbReference type="ChEBI" id="CHEBI:57540"/>
    </ligand>
</feature>
<feature type="binding site" description="in other chain" evidence="1">
    <location>
        <position position="300"/>
    </location>
    <ligand>
        <name>K(+)</name>
        <dbReference type="ChEBI" id="CHEBI:29103"/>
        <note>ligand shared between two tetrameric partners</note>
    </ligand>
</feature>
<feature type="binding site" description="in other chain" evidence="1">
    <location>
        <position position="302"/>
    </location>
    <ligand>
        <name>K(+)</name>
        <dbReference type="ChEBI" id="CHEBI:29103"/>
        <note>ligand shared between two tetrameric partners</note>
    </ligand>
</feature>
<feature type="binding site" evidence="1">
    <location>
        <position position="303"/>
    </location>
    <ligand>
        <name>IMP</name>
        <dbReference type="ChEBI" id="CHEBI:58053"/>
    </ligand>
</feature>
<feature type="binding site" description="in other chain" evidence="1">
    <location>
        <position position="305"/>
    </location>
    <ligand>
        <name>K(+)</name>
        <dbReference type="ChEBI" id="CHEBI:29103"/>
        <note>ligand shared between two tetrameric partners</note>
    </ligand>
</feature>
<feature type="binding site" evidence="1">
    <location>
        <begin position="338"/>
        <end position="340"/>
    </location>
    <ligand>
        <name>IMP</name>
        <dbReference type="ChEBI" id="CHEBI:58053"/>
    </ligand>
</feature>
<feature type="binding site" evidence="1">
    <location>
        <begin position="361"/>
        <end position="362"/>
    </location>
    <ligand>
        <name>IMP</name>
        <dbReference type="ChEBI" id="CHEBI:58053"/>
    </ligand>
</feature>
<feature type="binding site" evidence="1">
    <location>
        <begin position="385"/>
        <end position="389"/>
    </location>
    <ligand>
        <name>IMP</name>
        <dbReference type="ChEBI" id="CHEBI:58053"/>
    </ligand>
</feature>
<feature type="binding site" evidence="1">
    <location>
        <position position="415"/>
    </location>
    <ligand>
        <name>IMP</name>
        <dbReference type="ChEBI" id="CHEBI:58053"/>
    </ligand>
</feature>
<feature type="binding site" evidence="1">
    <location>
        <position position="469"/>
    </location>
    <ligand>
        <name>K(+)</name>
        <dbReference type="ChEBI" id="CHEBI:29103"/>
        <note>ligand shared between two tetrameric partners</note>
    </ligand>
</feature>
<feature type="binding site" evidence="1">
    <location>
        <position position="470"/>
    </location>
    <ligand>
        <name>K(+)</name>
        <dbReference type="ChEBI" id="CHEBI:29103"/>
        <note>ligand shared between two tetrameric partners</note>
    </ligand>
</feature>
<feature type="binding site" evidence="1">
    <location>
        <position position="471"/>
    </location>
    <ligand>
        <name>K(+)</name>
        <dbReference type="ChEBI" id="CHEBI:29103"/>
        <note>ligand shared between two tetrameric partners</note>
    </ligand>
</feature>
<sequence length="487" mass="51824">MLRIAKEALTFDDVLLVPAHSTVLPNTAELGTQLTATIRLNIPMLSAAMDTVTESRLAIALAQEGGLGFIHKNMSIERQAEEVSRVKKHESGVVTEPQTVTPTTTLRQVKELTARNGFAGYPVVTEDYELVGIITGRDVRFVTDLDQPVTAVMTPKERLVTVKEGETREVVLQKMHEKRVEKVLVVDDSFHLRGMITVKDFQKAERKPNACKDEHGRLRVGAAVGAGAGNEERIDALVAAGVDVLLIDSSHGHSEGVLQRIRETRAKYPNLQIVGGNVATGAGAKALADAGVSAVKVGIGPGSICTTRIVTGVGVPQITAIADAVEALEGTGIPVIADGGIRFSGDIAKAIAAGASCVMVGSMLAGTEESPGEIELYQGRSFKSYRGMGSLGAMSKGSSDRYFQTDNAADKLVPEGIEGRVAYKGLLKEIVHQQMGGLRSCMGLTGCGTINELRTKAEFVRISGAGIQESHVHDVTITKESPNYRMM</sequence>